<organism>
    <name type="scientific">Albidiferax ferrireducens (strain ATCC BAA-621 / DSM 15236 / T118)</name>
    <name type="common">Rhodoferax ferrireducens</name>
    <dbReference type="NCBI Taxonomy" id="338969"/>
    <lineage>
        <taxon>Bacteria</taxon>
        <taxon>Pseudomonadati</taxon>
        <taxon>Pseudomonadota</taxon>
        <taxon>Betaproteobacteria</taxon>
        <taxon>Burkholderiales</taxon>
        <taxon>Comamonadaceae</taxon>
        <taxon>Rhodoferax</taxon>
    </lineage>
</organism>
<gene>
    <name evidence="1" type="primary">rpmH</name>
    <name type="ordered locus">Rfer_4245</name>
</gene>
<evidence type="ECO:0000255" key="1">
    <source>
        <dbReference type="HAMAP-Rule" id="MF_00391"/>
    </source>
</evidence>
<evidence type="ECO:0000305" key="2"/>
<name>RL34_ALBFT</name>
<reference key="1">
    <citation type="submission" date="2006-02" db="EMBL/GenBank/DDBJ databases">
        <title>Complete sequence of chromosome of Rhodoferax ferrireducens DSM 15236.</title>
        <authorList>
            <person name="Copeland A."/>
            <person name="Lucas S."/>
            <person name="Lapidus A."/>
            <person name="Barry K."/>
            <person name="Detter J.C."/>
            <person name="Glavina del Rio T."/>
            <person name="Hammon N."/>
            <person name="Israni S."/>
            <person name="Pitluck S."/>
            <person name="Brettin T."/>
            <person name="Bruce D."/>
            <person name="Han C."/>
            <person name="Tapia R."/>
            <person name="Gilna P."/>
            <person name="Kiss H."/>
            <person name="Schmutz J."/>
            <person name="Larimer F."/>
            <person name="Land M."/>
            <person name="Kyrpides N."/>
            <person name="Ivanova N."/>
            <person name="Richardson P."/>
        </authorList>
    </citation>
    <scope>NUCLEOTIDE SEQUENCE [LARGE SCALE GENOMIC DNA]</scope>
    <source>
        <strain>ATCC BAA-621 / DSM 15236 / T118</strain>
    </source>
</reference>
<dbReference type="EMBL" id="CP000267">
    <property type="protein sequence ID" value="ABD71932.1"/>
    <property type="molecule type" value="Genomic_DNA"/>
</dbReference>
<dbReference type="RefSeq" id="WP_006299042.1">
    <property type="nucleotide sequence ID" value="NC_007908.1"/>
</dbReference>
<dbReference type="SMR" id="Q21QM1"/>
<dbReference type="STRING" id="338969.Rfer_4245"/>
<dbReference type="GeneID" id="98610591"/>
<dbReference type="KEGG" id="rfr:Rfer_4245"/>
<dbReference type="eggNOG" id="COG0230">
    <property type="taxonomic scope" value="Bacteria"/>
</dbReference>
<dbReference type="HOGENOM" id="CLU_129938_2_0_4"/>
<dbReference type="OrthoDB" id="9804164at2"/>
<dbReference type="Proteomes" id="UP000008332">
    <property type="component" value="Chromosome"/>
</dbReference>
<dbReference type="GO" id="GO:1990904">
    <property type="term" value="C:ribonucleoprotein complex"/>
    <property type="evidence" value="ECO:0007669"/>
    <property type="project" value="UniProtKB-KW"/>
</dbReference>
<dbReference type="GO" id="GO:0005840">
    <property type="term" value="C:ribosome"/>
    <property type="evidence" value="ECO:0007669"/>
    <property type="project" value="UniProtKB-KW"/>
</dbReference>
<dbReference type="GO" id="GO:0003735">
    <property type="term" value="F:structural constituent of ribosome"/>
    <property type="evidence" value="ECO:0007669"/>
    <property type="project" value="InterPro"/>
</dbReference>
<dbReference type="GO" id="GO:0006412">
    <property type="term" value="P:translation"/>
    <property type="evidence" value="ECO:0007669"/>
    <property type="project" value="UniProtKB-UniRule"/>
</dbReference>
<dbReference type="FunFam" id="1.10.287.3980:FF:000001">
    <property type="entry name" value="Mitochondrial ribosomal protein L34"/>
    <property type="match status" value="1"/>
</dbReference>
<dbReference type="Gene3D" id="1.10.287.3980">
    <property type="match status" value="1"/>
</dbReference>
<dbReference type="HAMAP" id="MF_00391">
    <property type="entry name" value="Ribosomal_bL34"/>
    <property type="match status" value="1"/>
</dbReference>
<dbReference type="InterPro" id="IPR000271">
    <property type="entry name" value="Ribosomal_bL34"/>
</dbReference>
<dbReference type="InterPro" id="IPR020939">
    <property type="entry name" value="Ribosomal_bL34_CS"/>
</dbReference>
<dbReference type="NCBIfam" id="TIGR01030">
    <property type="entry name" value="rpmH_bact"/>
    <property type="match status" value="1"/>
</dbReference>
<dbReference type="PANTHER" id="PTHR14503:SF4">
    <property type="entry name" value="LARGE RIBOSOMAL SUBUNIT PROTEIN BL34M"/>
    <property type="match status" value="1"/>
</dbReference>
<dbReference type="PANTHER" id="PTHR14503">
    <property type="entry name" value="MITOCHONDRIAL RIBOSOMAL PROTEIN 34 FAMILY MEMBER"/>
    <property type="match status" value="1"/>
</dbReference>
<dbReference type="Pfam" id="PF00468">
    <property type="entry name" value="Ribosomal_L34"/>
    <property type="match status" value="1"/>
</dbReference>
<dbReference type="PROSITE" id="PS00784">
    <property type="entry name" value="RIBOSOMAL_L34"/>
    <property type="match status" value="1"/>
</dbReference>
<accession>Q21QM1</accession>
<sequence>MKRTYQPSKIRRARTHGFLVRMKTRGGRAVINARRAKGRKRLAV</sequence>
<comment type="similarity">
    <text evidence="1">Belongs to the bacterial ribosomal protein bL34 family.</text>
</comment>
<keyword id="KW-1185">Reference proteome</keyword>
<keyword id="KW-0687">Ribonucleoprotein</keyword>
<keyword id="KW-0689">Ribosomal protein</keyword>
<proteinExistence type="inferred from homology"/>
<protein>
    <recommendedName>
        <fullName evidence="1">Large ribosomal subunit protein bL34</fullName>
    </recommendedName>
    <alternativeName>
        <fullName evidence="2">50S ribosomal protein L34</fullName>
    </alternativeName>
</protein>
<feature type="chain" id="PRO_1000013420" description="Large ribosomal subunit protein bL34">
    <location>
        <begin position="1"/>
        <end position="44"/>
    </location>
</feature>